<name>OSMY_ECOLI</name>
<comment type="subcellular location">
    <subcellularLocation>
        <location>Periplasm</location>
    </subcellularLocation>
</comment>
<comment type="induction">
    <text>By elevated osmotic pressure in the growth medium.</text>
</comment>
<dbReference type="EMBL" id="M89635">
    <property type="protein sequence ID" value="AAA16621.1"/>
    <property type="molecule type" value="Unassigned_DNA"/>
</dbReference>
<dbReference type="EMBL" id="U14003">
    <property type="protein sequence ID" value="AAA97272.1"/>
    <property type="molecule type" value="Genomic_DNA"/>
</dbReference>
<dbReference type="EMBL" id="U00096">
    <property type="protein sequence ID" value="AAC77329.1"/>
    <property type="molecule type" value="Genomic_DNA"/>
</dbReference>
<dbReference type="EMBL" id="AP009048">
    <property type="protein sequence ID" value="BAE78364.1"/>
    <property type="molecule type" value="Genomic_DNA"/>
</dbReference>
<dbReference type="EMBL" id="S67278">
    <property type="protein sequence ID" value="AAP14005.1"/>
    <property type="molecule type" value="Genomic_DNA"/>
</dbReference>
<dbReference type="PIR" id="A41899">
    <property type="entry name" value="A41899"/>
</dbReference>
<dbReference type="RefSeq" id="NP_418793.1">
    <property type="nucleotide sequence ID" value="NC_000913.3"/>
</dbReference>
<dbReference type="RefSeq" id="WP_001295748.1">
    <property type="nucleotide sequence ID" value="NZ_STEB01000033.1"/>
</dbReference>
<dbReference type="PDB" id="8RJX">
    <property type="method" value="NMR"/>
    <property type="chains" value="A=29-201"/>
</dbReference>
<dbReference type="PDBsum" id="8RJX"/>
<dbReference type="SMR" id="P0AFH8"/>
<dbReference type="BioGRID" id="4262791">
    <property type="interactions" value="173"/>
</dbReference>
<dbReference type="BioGRID" id="853172">
    <property type="interactions" value="1"/>
</dbReference>
<dbReference type="DIP" id="DIP-47968N"/>
<dbReference type="FunCoup" id="P0AFH8">
    <property type="interactions" value="78"/>
</dbReference>
<dbReference type="IntAct" id="P0AFH8">
    <property type="interactions" value="4"/>
</dbReference>
<dbReference type="STRING" id="511145.b4376"/>
<dbReference type="TCDB" id="8.A.213.1.2">
    <property type="family name" value="the bon domain-containing protein (bon dp) family"/>
</dbReference>
<dbReference type="jPOST" id="P0AFH8"/>
<dbReference type="PaxDb" id="511145-b4376"/>
<dbReference type="EnsemblBacteria" id="AAC77329">
    <property type="protein sequence ID" value="AAC77329"/>
    <property type="gene ID" value="b4376"/>
</dbReference>
<dbReference type="GeneID" id="93777469"/>
<dbReference type="GeneID" id="948895"/>
<dbReference type="KEGG" id="ecj:JW4338"/>
<dbReference type="KEGG" id="eco:b4376"/>
<dbReference type="KEGG" id="ecoc:C3026_23640"/>
<dbReference type="PATRIC" id="fig|1411691.4.peg.2312"/>
<dbReference type="EchoBASE" id="EB1364"/>
<dbReference type="eggNOG" id="COG2823">
    <property type="taxonomic scope" value="Bacteria"/>
</dbReference>
<dbReference type="HOGENOM" id="CLU_084193_0_0_6"/>
<dbReference type="InParanoid" id="P0AFH8"/>
<dbReference type="OMA" id="DISVKTH"/>
<dbReference type="OrthoDB" id="6477610at2"/>
<dbReference type="PhylomeDB" id="P0AFH8"/>
<dbReference type="BioCyc" id="EcoCyc:EG11391-MONOMER"/>
<dbReference type="PRO" id="PR:P0AFH8"/>
<dbReference type="Proteomes" id="UP000000625">
    <property type="component" value="Chromosome"/>
</dbReference>
<dbReference type="GO" id="GO:0030288">
    <property type="term" value="C:outer membrane-bounded periplasmic space"/>
    <property type="evidence" value="ECO:0000314"/>
    <property type="project" value="EcoCyc"/>
</dbReference>
<dbReference type="GO" id="GO:0061077">
    <property type="term" value="P:chaperone-mediated protein folding"/>
    <property type="evidence" value="ECO:0000314"/>
    <property type="project" value="EcoCyc"/>
</dbReference>
<dbReference type="GO" id="GO:0006972">
    <property type="term" value="P:hyperosmotic response"/>
    <property type="evidence" value="ECO:0000270"/>
    <property type="project" value="EcoCyc"/>
</dbReference>
<dbReference type="FunFam" id="3.30.1340.30:FF:000001">
    <property type="entry name" value="Molecular chaperone OsmY"/>
    <property type="match status" value="2"/>
</dbReference>
<dbReference type="Gene3D" id="3.30.1340.30">
    <property type="match status" value="2"/>
</dbReference>
<dbReference type="InterPro" id="IPR007055">
    <property type="entry name" value="BON_dom"/>
</dbReference>
<dbReference type="InterPro" id="IPR051686">
    <property type="entry name" value="Lipoprotein_DolP"/>
</dbReference>
<dbReference type="InterPro" id="IPR014004">
    <property type="entry name" value="Transpt-assoc_nodulatn_dom_bac"/>
</dbReference>
<dbReference type="NCBIfam" id="NF007858">
    <property type="entry name" value="PRK10568.1"/>
    <property type="match status" value="1"/>
</dbReference>
<dbReference type="PANTHER" id="PTHR34606">
    <property type="entry name" value="BON DOMAIN-CONTAINING PROTEIN"/>
    <property type="match status" value="1"/>
</dbReference>
<dbReference type="PANTHER" id="PTHR34606:SF15">
    <property type="entry name" value="BON DOMAIN-CONTAINING PROTEIN"/>
    <property type="match status" value="1"/>
</dbReference>
<dbReference type="Pfam" id="PF04972">
    <property type="entry name" value="BON"/>
    <property type="match status" value="2"/>
</dbReference>
<dbReference type="SMART" id="SM00749">
    <property type="entry name" value="BON"/>
    <property type="match status" value="2"/>
</dbReference>
<dbReference type="PROSITE" id="PS50914">
    <property type="entry name" value="BON"/>
    <property type="match status" value="2"/>
</dbReference>
<feature type="signal peptide" evidence="2 3 4">
    <location>
        <begin position="1"/>
        <end position="28"/>
    </location>
</feature>
<feature type="chain" id="PRO_0000021953" description="Osmotically-inducible protein Y">
    <location>
        <begin position="29"/>
        <end position="201"/>
    </location>
</feature>
<feature type="domain" description="BON 1" evidence="1">
    <location>
        <begin position="55"/>
        <end position="123"/>
    </location>
</feature>
<feature type="domain" description="BON 2" evidence="1">
    <location>
        <begin position="134"/>
        <end position="201"/>
    </location>
</feature>
<feature type="helix" evidence="5">
    <location>
        <begin position="57"/>
        <end position="69"/>
    </location>
</feature>
<feature type="helix" evidence="5">
    <location>
        <begin position="75"/>
        <end position="77"/>
    </location>
</feature>
<feature type="strand" evidence="5">
    <location>
        <begin position="78"/>
        <end position="83"/>
    </location>
</feature>
<feature type="strand" evidence="5">
    <location>
        <begin position="86"/>
        <end position="95"/>
    </location>
</feature>
<feature type="helix" evidence="5">
    <location>
        <begin position="96"/>
        <end position="106"/>
    </location>
</feature>
<feature type="strand" evidence="5">
    <location>
        <begin position="114"/>
        <end position="121"/>
    </location>
</feature>
<feature type="helix" evidence="5">
    <location>
        <begin position="136"/>
        <end position="146"/>
    </location>
</feature>
<feature type="strand" evidence="5">
    <location>
        <begin position="149"/>
        <end position="151"/>
    </location>
</feature>
<feature type="turn" evidence="5">
    <location>
        <begin position="154"/>
        <end position="156"/>
    </location>
</feature>
<feature type="strand" evidence="5">
    <location>
        <begin position="158"/>
        <end position="162"/>
    </location>
</feature>
<feature type="strand" evidence="5">
    <location>
        <begin position="165"/>
        <end position="174"/>
    </location>
</feature>
<feature type="helix" evidence="5">
    <location>
        <begin position="175"/>
        <end position="187"/>
    </location>
</feature>
<feature type="strand" evidence="5">
    <location>
        <begin position="192"/>
        <end position="196"/>
    </location>
</feature>
<protein>
    <recommendedName>
        <fullName>Osmotically-inducible protein Y</fullName>
    </recommendedName>
</protein>
<accession>P0AFH8</accession>
<accession>P27291</accession>
<accession>Q2M5U2</accession>
<evidence type="ECO:0000255" key="1">
    <source>
        <dbReference type="PROSITE-ProRule" id="PRU00229"/>
    </source>
</evidence>
<evidence type="ECO:0000269" key="2">
    <source>
    </source>
</evidence>
<evidence type="ECO:0000269" key="3">
    <source>
    </source>
</evidence>
<evidence type="ECO:0000269" key="4">
    <source>
    </source>
</evidence>
<evidence type="ECO:0007829" key="5">
    <source>
        <dbReference type="PDB" id="8RJX"/>
    </source>
</evidence>
<sequence length="201" mass="21074">MTMTRLKISKTLLAVMLTSAVATGSAYAENNAQTTNESAGQKVDSSMNKVGNFMDDSAITAKVKAALVDHDNIKSTDISVKTDQKVVTLSGFVESQAQAEEAVKVAKGVEGVTSVSDKLHVRDAKEGSVKGYAGDTATTSEIKAKLLADDIVPSRHVKVETTDGVVQLSGTVDSQAQSDRAESIAKAVDGVKSVKNDLKTK</sequence>
<keyword id="KW-0002">3D-structure</keyword>
<keyword id="KW-0903">Direct protein sequencing</keyword>
<keyword id="KW-0574">Periplasm</keyword>
<keyword id="KW-1185">Reference proteome</keyword>
<keyword id="KW-0677">Repeat</keyword>
<keyword id="KW-0732">Signal</keyword>
<organism>
    <name type="scientific">Escherichia coli (strain K12)</name>
    <dbReference type="NCBI Taxonomy" id="83333"/>
    <lineage>
        <taxon>Bacteria</taxon>
        <taxon>Pseudomonadati</taxon>
        <taxon>Pseudomonadota</taxon>
        <taxon>Gammaproteobacteria</taxon>
        <taxon>Enterobacterales</taxon>
        <taxon>Enterobacteriaceae</taxon>
        <taxon>Escherichia</taxon>
    </lineage>
</organism>
<proteinExistence type="evidence at protein level"/>
<gene>
    <name type="primary">osmY</name>
    <name type="ordered locus">b4376</name>
    <name type="ordered locus">JW4338</name>
</gene>
<reference key="1">
    <citation type="journal article" date="1992" name="J. Bacteriol.">
        <title>osmY, a new hyperosmotically inducible gene, encodes a periplasmic protein in Escherichia coli.</title>
        <authorList>
            <person name="Yim H.H."/>
            <person name="Villarejo M."/>
        </authorList>
    </citation>
    <scope>NUCLEOTIDE SEQUENCE [GENOMIC DNA]</scope>
    <scope>PROTEIN SEQUENCE OF 29-43</scope>
    <source>
        <strain>K12</strain>
    </source>
</reference>
<reference key="2">
    <citation type="journal article" date="1995" name="Nucleic Acids Res.">
        <title>Analysis of the Escherichia coli genome VI: DNA sequence of the region from 92.8 through 100 minutes.</title>
        <authorList>
            <person name="Burland V.D."/>
            <person name="Plunkett G. III"/>
            <person name="Sofia H.J."/>
            <person name="Daniels D.L."/>
            <person name="Blattner F.R."/>
        </authorList>
    </citation>
    <scope>NUCLEOTIDE SEQUENCE [LARGE SCALE GENOMIC DNA]</scope>
    <source>
        <strain>K12 / MG1655 / ATCC 47076</strain>
    </source>
</reference>
<reference key="3">
    <citation type="journal article" date="1997" name="Science">
        <title>The complete genome sequence of Escherichia coli K-12.</title>
        <authorList>
            <person name="Blattner F.R."/>
            <person name="Plunkett G. III"/>
            <person name="Bloch C.A."/>
            <person name="Perna N.T."/>
            <person name="Burland V."/>
            <person name="Riley M."/>
            <person name="Collado-Vides J."/>
            <person name="Glasner J.D."/>
            <person name="Rode C.K."/>
            <person name="Mayhew G.F."/>
            <person name="Gregor J."/>
            <person name="Davis N.W."/>
            <person name="Kirkpatrick H.A."/>
            <person name="Goeden M.A."/>
            <person name="Rose D.J."/>
            <person name="Mau B."/>
            <person name="Shao Y."/>
        </authorList>
    </citation>
    <scope>NUCLEOTIDE SEQUENCE [LARGE SCALE GENOMIC DNA]</scope>
    <source>
        <strain>K12 / MG1655 / ATCC 47076</strain>
    </source>
</reference>
<reference key="4">
    <citation type="journal article" date="2006" name="Mol. Syst. Biol.">
        <title>Highly accurate genome sequences of Escherichia coli K-12 strains MG1655 and W3110.</title>
        <authorList>
            <person name="Hayashi K."/>
            <person name="Morooka N."/>
            <person name="Yamamoto Y."/>
            <person name="Fujita K."/>
            <person name="Isono K."/>
            <person name="Choi S."/>
            <person name="Ohtsubo E."/>
            <person name="Baba T."/>
            <person name="Wanner B.L."/>
            <person name="Mori H."/>
            <person name="Horiuchi T."/>
        </authorList>
    </citation>
    <scope>NUCLEOTIDE SEQUENCE [LARGE SCALE GENOMIC DNA]</scope>
    <source>
        <strain>K12 / W3110 / ATCC 27325 / DSM 5911</strain>
    </source>
</reference>
<reference key="5">
    <citation type="journal article" date="1993" name="J. Bacteriol.">
        <title>Complex transcriptional control of the sigma s-dependent stationary-phase-induced and osmotically regulated osmY (csi-5) gene suggests novel roles for Lrp, cyclic AMP (cAMP) receptor protein-cAMP complex, and integration host factor in the stationary-phase response of Escherichia coli.</title>
        <authorList>
            <person name="Lange R."/>
            <person name="Barth M."/>
            <person name="Hengge-Aronis R."/>
        </authorList>
    </citation>
    <scope>NUCLEOTIDE SEQUENCE [GENOMIC DNA] OF 1-12</scope>
</reference>
<reference key="6">
    <citation type="journal article" date="1997" name="Electrophoresis">
        <title>Comparing the predicted and observed properties of proteins encoded in the genome of Escherichia coli K-12.</title>
        <authorList>
            <person name="Link A.J."/>
            <person name="Robison K."/>
            <person name="Church G.M."/>
        </authorList>
    </citation>
    <scope>PROTEIN SEQUENCE OF 29-40</scope>
    <source>
        <strain>K12 / EMG2</strain>
    </source>
</reference>
<reference key="7">
    <citation type="journal article" date="1998" name="J. Mol. Biol.">
        <title>Protein identification with N and C-terminal sequence tags in proteome projects.</title>
        <authorList>
            <person name="Wilkins M.R."/>
            <person name="Gasteiger E."/>
            <person name="Tonella L."/>
            <person name="Ou K."/>
            <person name="Tyler M."/>
            <person name="Sanchez J.-C."/>
            <person name="Gooley A.A."/>
            <person name="Walsh B.J."/>
            <person name="Bairoch A."/>
            <person name="Appel R.D."/>
            <person name="Williams K.L."/>
            <person name="Hochstrasser D.F."/>
        </authorList>
    </citation>
    <scope>PROTEIN SEQUENCE OF 29-32</scope>
    <source>
        <strain>K12 / W3110 / ATCC 27325 / DSM 5911</strain>
    </source>
</reference>